<name>YGH4_YEAST</name>
<dbReference type="EMBL" id="Z72596">
    <property type="protein sequence ID" value="CAA96776.1"/>
    <property type="molecule type" value="Genomic_DNA"/>
</dbReference>
<dbReference type="PIR" id="S64081">
    <property type="entry name" value="S64081"/>
</dbReference>
<dbReference type="DIP" id="DIP-5476N"/>
<dbReference type="PaxDb" id="4932-YGL074C"/>
<dbReference type="EnsemblFungi" id="YGL074C_mRNA">
    <property type="protein sequence ID" value="YGL074C"/>
    <property type="gene ID" value="YGL074C"/>
</dbReference>
<dbReference type="AGR" id="SGD:S000003042"/>
<dbReference type="SGD" id="S000003042">
    <property type="gene designation" value="YGL074C"/>
</dbReference>
<dbReference type="HOGENOM" id="CLU_2199050_0_0_1"/>
<dbReference type="GO" id="GO:0016020">
    <property type="term" value="C:membrane"/>
    <property type="evidence" value="ECO:0007669"/>
    <property type="project" value="UniProtKB-SubCell"/>
</dbReference>
<sequence length="108" mass="11500">MAVEDVVLASVRSVVKISFGCKIFSMSSSFKLGKGSIRGASLTFDSLVVPVFAALFMAPTIQLSFCLFCFLSLPALFVKHTSNSLPLSTGTVLLFGICCQVAKSLLKI</sequence>
<gene>
    <name type="ordered locus">YGL074C</name>
</gene>
<reference key="1">
    <citation type="journal article" date="1997" name="Yeast">
        <title>Sequence analysis of 203 kilobases from Saccharomyces cerevisiae chromosome VII.</title>
        <authorList>
            <person name="Rieger M."/>
            <person name="Brueckner M."/>
            <person name="Schaefer M."/>
            <person name="Mueller-Auer S."/>
        </authorList>
    </citation>
    <scope>NUCLEOTIDE SEQUENCE [GENOMIC DNA]</scope>
    <source>
        <strain>ATCC 204508 / S288c</strain>
    </source>
</reference>
<reference key="2">
    <citation type="journal article" date="1997" name="Nature">
        <title>The nucleotide sequence of Saccharomyces cerevisiae chromosome VII.</title>
        <authorList>
            <person name="Tettelin H."/>
            <person name="Agostoni-Carbone M.L."/>
            <person name="Albermann K."/>
            <person name="Albers M."/>
            <person name="Arroyo J."/>
            <person name="Backes U."/>
            <person name="Barreiros T."/>
            <person name="Bertani I."/>
            <person name="Bjourson A.J."/>
            <person name="Brueckner M."/>
            <person name="Bruschi C.V."/>
            <person name="Carignani G."/>
            <person name="Castagnoli L."/>
            <person name="Cerdan E."/>
            <person name="Clemente M.L."/>
            <person name="Coblenz A."/>
            <person name="Coglievina M."/>
            <person name="Coissac E."/>
            <person name="Defoor E."/>
            <person name="Del Bino S."/>
            <person name="Delius H."/>
            <person name="Delneri D."/>
            <person name="de Wergifosse P."/>
            <person name="Dujon B."/>
            <person name="Durand P."/>
            <person name="Entian K.-D."/>
            <person name="Eraso P."/>
            <person name="Escribano V."/>
            <person name="Fabiani L."/>
            <person name="Fartmann B."/>
            <person name="Feroli F."/>
            <person name="Feuermann M."/>
            <person name="Frontali L."/>
            <person name="Garcia-Gonzalez M."/>
            <person name="Garcia-Saez M.I."/>
            <person name="Goffeau A."/>
            <person name="Guerreiro P."/>
            <person name="Hani J."/>
            <person name="Hansen M."/>
            <person name="Hebling U."/>
            <person name="Hernandez K."/>
            <person name="Heumann K."/>
            <person name="Hilger F."/>
            <person name="Hofmann B."/>
            <person name="Indge K.J."/>
            <person name="James C.M."/>
            <person name="Klima R."/>
            <person name="Koetter P."/>
            <person name="Kramer B."/>
            <person name="Kramer W."/>
            <person name="Lauquin G."/>
            <person name="Leuther H."/>
            <person name="Louis E.J."/>
            <person name="Maillier E."/>
            <person name="Marconi A."/>
            <person name="Martegani E."/>
            <person name="Mazon M.J."/>
            <person name="Mazzoni C."/>
            <person name="McReynolds A.D.K."/>
            <person name="Melchioretto P."/>
            <person name="Mewes H.-W."/>
            <person name="Minenkova O."/>
            <person name="Mueller-Auer S."/>
            <person name="Nawrocki A."/>
            <person name="Netter P."/>
            <person name="Neu R."/>
            <person name="Nombela C."/>
            <person name="Oliver S.G."/>
            <person name="Panzeri L."/>
            <person name="Paoluzi S."/>
            <person name="Plevani P."/>
            <person name="Portetelle D."/>
            <person name="Portillo F."/>
            <person name="Potier S."/>
            <person name="Purnelle B."/>
            <person name="Rieger M."/>
            <person name="Riles L."/>
            <person name="Rinaldi T."/>
            <person name="Robben J."/>
            <person name="Rodrigues-Pousada C."/>
            <person name="Rodriguez-Belmonte E."/>
            <person name="Rodriguez-Torres A.M."/>
            <person name="Rose M."/>
            <person name="Ruzzi M."/>
            <person name="Saliola M."/>
            <person name="Sanchez-Perez M."/>
            <person name="Schaefer B."/>
            <person name="Schaefer M."/>
            <person name="Scharfe M."/>
            <person name="Schmidheini T."/>
            <person name="Schreer A."/>
            <person name="Skala J."/>
            <person name="Souciet J.-L."/>
            <person name="Steensma H.Y."/>
            <person name="Talla E."/>
            <person name="Thierry A."/>
            <person name="Vandenbol M."/>
            <person name="van der Aart Q.J.M."/>
            <person name="Van Dyck L."/>
            <person name="Vanoni M."/>
            <person name="Verhasselt P."/>
            <person name="Voet M."/>
            <person name="Volckaert G."/>
            <person name="Wambutt R."/>
            <person name="Watson M.D."/>
            <person name="Weber N."/>
            <person name="Wedler E."/>
            <person name="Wedler H."/>
            <person name="Wipfli P."/>
            <person name="Wolf K."/>
            <person name="Wright L.F."/>
            <person name="Zaccaria P."/>
            <person name="Zimmermann M."/>
            <person name="Zollner A."/>
            <person name="Kleine K."/>
        </authorList>
    </citation>
    <scope>NUCLEOTIDE SEQUENCE [LARGE SCALE GENOMIC DNA]</scope>
    <source>
        <strain>ATCC 204508 / S288c</strain>
    </source>
</reference>
<reference key="3">
    <citation type="journal article" date="2014" name="G3 (Bethesda)">
        <title>The reference genome sequence of Saccharomyces cerevisiae: Then and now.</title>
        <authorList>
            <person name="Engel S.R."/>
            <person name="Dietrich F.S."/>
            <person name="Fisk D.G."/>
            <person name="Binkley G."/>
            <person name="Balakrishnan R."/>
            <person name="Costanzo M.C."/>
            <person name="Dwight S.S."/>
            <person name="Hitz B.C."/>
            <person name="Karra K."/>
            <person name="Nash R.S."/>
            <person name="Weng S."/>
            <person name="Wong E.D."/>
            <person name="Lloyd P."/>
            <person name="Skrzypek M.S."/>
            <person name="Miyasato S.R."/>
            <person name="Simison M."/>
            <person name="Cherry J.M."/>
        </authorList>
    </citation>
    <scope>GENOME REANNOTATION</scope>
    <source>
        <strain>ATCC 204508 / S288c</strain>
    </source>
</reference>
<proteinExistence type="uncertain"/>
<protein>
    <recommendedName>
        <fullName>Putative uncharacterized protein YGL074C</fullName>
    </recommendedName>
</protein>
<comment type="subcellular location">
    <subcellularLocation>
        <location evidence="2">Membrane</location>
        <topology evidence="2">Multi-pass membrane protein</topology>
    </subcellularLocation>
</comment>
<comment type="miscellaneous">
    <text evidence="2">Partially overlaps HSF1.</text>
</comment>
<comment type="caution">
    <text evidence="3">Product of a dubious gene prediction unlikely to encode a functional protein. Because of that it is not part of the S.cerevisiae S288c complete/reference proteome set.</text>
</comment>
<feature type="chain" id="PRO_0000202761" description="Putative uncharacterized protein YGL074C">
    <location>
        <begin position="1"/>
        <end position="108"/>
    </location>
</feature>
<feature type="transmembrane region" description="Helical" evidence="1">
    <location>
        <begin position="51"/>
        <end position="71"/>
    </location>
</feature>
<feature type="transmembrane region" description="Helical" evidence="1">
    <location>
        <begin position="86"/>
        <end position="106"/>
    </location>
</feature>
<evidence type="ECO:0000255" key="1"/>
<evidence type="ECO:0000305" key="2"/>
<evidence type="ECO:0000305" key="3">
    <source>
    </source>
</evidence>
<keyword id="KW-0472">Membrane</keyword>
<keyword id="KW-0812">Transmembrane</keyword>
<keyword id="KW-1133">Transmembrane helix</keyword>
<organism>
    <name type="scientific">Saccharomyces cerevisiae (strain ATCC 204508 / S288c)</name>
    <name type="common">Baker's yeast</name>
    <dbReference type="NCBI Taxonomy" id="559292"/>
    <lineage>
        <taxon>Eukaryota</taxon>
        <taxon>Fungi</taxon>
        <taxon>Dikarya</taxon>
        <taxon>Ascomycota</taxon>
        <taxon>Saccharomycotina</taxon>
        <taxon>Saccharomycetes</taxon>
        <taxon>Saccharomycetales</taxon>
        <taxon>Saccharomycetaceae</taxon>
        <taxon>Saccharomyces</taxon>
    </lineage>
</organism>
<accession>P53160</accession>